<protein>
    <recommendedName>
        <fullName evidence="2">PAT complex subunit Asterix</fullName>
    </recommendedName>
    <alternativeName>
        <fullName>Protein WDR83OS homolog</fullName>
    </alternativeName>
    <alternativeName>
        <fullName evidence="2">Protein associated with the ER translocon of 10kDa</fullName>
        <shortName evidence="2">PAT-10</shortName>
        <shortName evidence="2">PAT10</shortName>
    </alternativeName>
</protein>
<dbReference type="EMBL" id="BC111635">
    <property type="protein sequence ID" value="AAI11636.1"/>
    <property type="molecule type" value="mRNA"/>
</dbReference>
<dbReference type="RefSeq" id="NP_001039475.1">
    <property type="nucleotide sequence ID" value="NM_001046010.1"/>
</dbReference>
<dbReference type="SMR" id="Q2M2T6"/>
<dbReference type="FunCoup" id="Q2M2T6">
    <property type="interactions" value="3017"/>
</dbReference>
<dbReference type="STRING" id="9913.ENSBTAP00000059696"/>
<dbReference type="PaxDb" id="9913-ENSBTAP00000008194"/>
<dbReference type="Ensembl" id="ENSBTAT00000008194.5">
    <property type="protein sequence ID" value="ENSBTAP00000008194.3"/>
    <property type="gene ID" value="ENSBTAG00000006244.5"/>
</dbReference>
<dbReference type="GeneID" id="508733"/>
<dbReference type="KEGG" id="bta:508733"/>
<dbReference type="CTD" id="51398"/>
<dbReference type="VEuPathDB" id="HostDB:ENSBTAG00000006244"/>
<dbReference type="VGNC" id="VGNC:52897">
    <property type="gene designation" value="WDR83OS"/>
</dbReference>
<dbReference type="eggNOG" id="KOG3462">
    <property type="taxonomic scope" value="Eukaryota"/>
</dbReference>
<dbReference type="GeneTree" id="ENSGT00390000002121"/>
<dbReference type="HOGENOM" id="CLU_128526_1_1_1"/>
<dbReference type="InParanoid" id="Q2M2T6"/>
<dbReference type="OMA" id="MFGLMMK"/>
<dbReference type="OrthoDB" id="284718at2759"/>
<dbReference type="TreeFam" id="TF315003"/>
<dbReference type="Proteomes" id="UP000009136">
    <property type="component" value="Chromosome 7"/>
</dbReference>
<dbReference type="Bgee" id="ENSBTAG00000006244">
    <property type="expression patterns" value="Expressed in laryngeal cartilage and 107 other cell types or tissues"/>
</dbReference>
<dbReference type="GO" id="GO:0005789">
    <property type="term" value="C:endoplasmic reticulum membrane"/>
    <property type="evidence" value="ECO:0000250"/>
    <property type="project" value="UniProtKB"/>
</dbReference>
<dbReference type="GO" id="GO:0160064">
    <property type="term" value="C:multi-pass translocon complex"/>
    <property type="evidence" value="ECO:0000250"/>
    <property type="project" value="UniProtKB"/>
</dbReference>
<dbReference type="GO" id="GO:0044183">
    <property type="term" value="F:protein folding chaperone"/>
    <property type="evidence" value="ECO:0000250"/>
    <property type="project" value="UniProtKB"/>
</dbReference>
<dbReference type="GO" id="GO:0160063">
    <property type="term" value="P:multi-pass transmembrane protein insertion into ER membrane"/>
    <property type="evidence" value="ECO:0000250"/>
    <property type="project" value="UniProtKB"/>
</dbReference>
<dbReference type="GO" id="GO:0045048">
    <property type="term" value="P:protein insertion into ER membrane"/>
    <property type="evidence" value="ECO:0000250"/>
    <property type="project" value="UniProtKB"/>
</dbReference>
<dbReference type="InterPro" id="IPR005351">
    <property type="entry name" value="ASTER"/>
</dbReference>
<dbReference type="PANTHER" id="PTHR13193">
    <property type="entry name" value="CGI-140"/>
    <property type="match status" value="1"/>
</dbReference>
<dbReference type="PANTHER" id="PTHR13193:SF0">
    <property type="entry name" value="PAT COMPLEX SUBUNIT ASTERIX"/>
    <property type="match status" value="1"/>
</dbReference>
<dbReference type="Pfam" id="PF03669">
    <property type="entry name" value="ASTER"/>
    <property type="match status" value="1"/>
</dbReference>
<sequence>MSANNMSDPRRPNKVLRYKPPPSECNPALDDPTPDYMNLLGMIFSMCGLMLKLKWCAWVAVYCSFISFANSRSSEDTKQMMSSFMLSISAVVMSYLQNPQPMTPPW</sequence>
<proteinExistence type="inferred from homology"/>
<accession>Q2M2T6</accession>
<reference key="1">
    <citation type="submission" date="2006-01" db="EMBL/GenBank/DDBJ databases">
        <authorList>
            <consortium name="NIH - Mammalian Gene Collection (MGC) project"/>
        </authorList>
    </citation>
    <scope>NUCLEOTIDE SEQUENCE [LARGE SCALE MRNA]</scope>
    <source>
        <strain>Hereford</strain>
        <tissue>Testis</tissue>
    </source>
</reference>
<feature type="initiator methionine" description="Removed" evidence="2">
    <location>
        <position position="1"/>
    </location>
</feature>
<feature type="chain" id="PRO_0000245357" description="PAT complex subunit Asterix">
    <location>
        <begin position="2"/>
        <end position="106"/>
    </location>
</feature>
<feature type="topological domain" description="Cytoplasmic" evidence="1">
    <location>
        <begin position="2"/>
        <end position="32"/>
    </location>
</feature>
<feature type="transmembrane region" description="Helical" evidence="1">
    <location>
        <begin position="33"/>
        <end position="51"/>
    </location>
</feature>
<feature type="topological domain" description="Lumenal" evidence="1">
    <location>
        <position position="52"/>
    </location>
</feature>
<feature type="transmembrane region" description="Helical" evidence="1">
    <location>
        <begin position="53"/>
        <end position="70"/>
    </location>
</feature>
<feature type="topological domain" description="Cytoplasmic" evidence="1">
    <location>
        <begin position="71"/>
        <end position="74"/>
    </location>
</feature>
<feature type="transmembrane region" description="Helical" evidence="1">
    <location>
        <begin position="75"/>
        <end position="95"/>
    </location>
</feature>
<feature type="topological domain" description="Lumenal" evidence="1">
    <location>
        <begin position="96"/>
        <end position="106"/>
    </location>
</feature>
<feature type="region of interest" description="Disordered" evidence="3">
    <location>
        <begin position="1"/>
        <end position="29"/>
    </location>
</feature>
<feature type="modified residue" description="N-acetylserine" evidence="2">
    <location>
        <position position="2"/>
    </location>
</feature>
<name>ASTER_BOVIN</name>
<comment type="function">
    <text evidence="1 2">Component of the multi-pass translocon (MPT) complex that mediates insertion of multi-pass membrane proteins into the lipid bilayer of membranes. The MPT complex takes over after the SEC61 complex: following membrane insertion of the first few transmembrane segments of proteins by the SEC61 complex, the MPT complex occludes the lateral gate of the SEC61 complex to promote insertion of subsequent transmembrane regions (By similarity). Within the MPT complex, the PAT subcomplex sequesters any highly polar regions in the transmembrane domains away from the non-polar membrane environment until they can be buried in the interior of the fully assembled protein. Within the PAT subcomplex, WDR83OS/Asterix binds to and redirects the substrate to a location behind the SEC61 complex (By similarity).</text>
</comment>
<comment type="subunit">
    <text evidence="2">Component of the PAT complex, composed of WDR83OS/Asterix and CCDC47. The PAT complex is part of the multi-pass translocon (MPT) complex, composed of three subcomplexes, the GEL complex (composed of RAB5IF/OPTI and TMCO1), the BOS complex (composed of NCLN/Nicalin, NOMO1 and TMEM147) and the PAT complex (composed of WDR83OS/Asterix and CCDC47). The MPT complex associates with the SEC61 complex.</text>
</comment>
<comment type="subcellular location">
    <subcellularLocation>
        <location evidence="2">Endoplasmic reticulum membrane</location>
        <topology evidence="2">Multi-pass membrane protein</topology>
    </subcellularLocation>
</comment>
<comment type="similarity">
    <text evidence="4">Belongs to the Asterix family.</text>
</comment>
<evidence type="ECO:0000250" key="1">
    <source>
        <dbReference type="UniProtKB" id="A0A8I3NQW8"/>
    </source>
</evidence>
<evidence type="ECO:0000250" key="2">
    <source>
        <dbReference type="UniProtKB" id="Q9Y284"/>
    </source>
</evidence>
<evidence type="ECO:0000256" key="3">
    <source>
        <dbReference type="SAM" id="MobiDB-lite"/>
    </source>
</evidence>
<evidence type="ECO:0000305" key="4"/>
<keyword id="KW-0007">Acetylation</keyword>
<keyword id="KW-0143">Chaperone</keyword>
<keyword id="KW-0256">Endoplasmic reticulum</keyword>
<keyword id="KW-0472">Membrane</keyword>
<keyword id="KW-1185">Reference proteome</keyword>
<keyword id="KW-0812">Transmembrane</keyword>
<keyword id="KW-1133">Transmembrane helix</keyword>
<organism>
    <name type="scientific">Bos taurus</name>
    <name type="common">Bovine</name>
    <dbReference type="NCBI Taxonomy" id="9913"/>
    <lineage>
        <taxon>Eukaryota</taxon>
        <taxon>Metazoa</taxon>
        <taxon>Chordata</taxon>
        <taxon>Craniata</taxon>
        <taxon>Vertebrata</taxon>
        <taxon>Euteleostomi</taxon>
        <taxon>Mammalia</taxon>
        <taxon>Eutheria</taxon>
        <taxon>Laurasiatheria</taxon>
        <taxon>Artiodactyla</taxon>
        <taxon>Ruminantia</taxon>
        <taxon>Pecora</taxon>
        <taxon>Bovidae</taxon>
        <taxon>Bovinae</taxon>
        <taxon>Bos</taxon>
    </lineage>
</organism>
<gene>
    <name type="primary">WDR83OS</name>
</gene>